<keyword id="KW-0687">Ribonucleoprotein</keyword>
<keyword id="KW-0689">Ribosomal protein</keyword>
<keyword id="KW-0694">RNA-binding</keyword>
<keyword id="KW-0699">rRNA-binding</keyword>
<feature type="chain" id="PRO_1000141097" description="Small ribosomal subunit protein uS11">
    <location>
        <begin position="1"/>
        <end position="134"/>
    </location>
</feature>
<proteinExistence type="inferred from homology"/>
<dbReference type="EMBL" id="CP000820">
    <property type="protein sequence ID" value="ABW15368.1"/>
    <property type="molecule type" value="Genomic_DNA"/>
</dbReference>
<dbReference type="RefSeq" id="WP_020463463.1">
    <property type="nucleotide sequence ID" value="NC_009921.1"/>
</dbReference>
<dbReference type="SMR" id="A8LB07"/>
<dbReference type="STRING" id="298653.Franean1_6024"/>
<dbReference type="KEGG" id="fre:Franean1_6024"/>
<dbReference type="eggNOG" id="COG0100">
    <property type="taxonomic scope" value="Bacteria"/>
</dbReference>
<dbReference type="HOGENOM" id="CLU_072439_5_0_11"/>
<dbReference type="GO" id="GO:1990904">
    <property type="term" value="C:ribonucleoprotein complex"/>
    <property type="evidence" value="ECO:0007669"/>
    <property type="project" value="UniProtKB-KW"/>
</dbReference>
<dbReference type="GO" id="GO:0005840">
    <property type="term" value="C:ribosome"/>
    <property type="evidence" value="ECO:0007669"/>
    <property type="project" value="UniProtKB-KW"/>
</dbReference>
<dbReference type="GO" id="GO:0019843">
    <property type="term" value="F:rRNA binding"/>
    <property type="evidence" value="ECO:0007669"/>
    <property type="project" value="UniProtKB-UniRule"/>
</dbReference>
<dbReference type="GO" id="GO:0003735">
    <property type="term" value="F:structural constituent of ribosome"/>
    <property type="evidence" value="ECO:0007669"/>
    <property type="project" value="InterPro"/>
</dbReference>
<dbReference type="GO" id="GO:0006412">
    <property type="term" value="P:translation"/>
    <property type="evidence" value="ECO:0007669"/>
    <property type="project" value="UniProtKB-UniRule"/>
</dbReference>
<dbReference type="FunFam" id="3.30.420.80:FF:000001">
    <property type="entry name" value="30S ribosomal protein S11"/>
    <property type="match status" value="1"/>
</dbReference>
<dbReference type="Gene3D" id="3.30.420.80">
    <property type="entry name" value="Ribosomal protein S11"/>
    <property type="match status" value="1"/>
</dbReference>
<dbReference type="HAMAP" id="MF_01310">
    <property type="entry name" value="Ribosomal_uS11"/>
    <property type="match status" value="1"/>
</dbReference>
<dbReference type="InterPro" id="IPR001971">
    <property type="entry name" value="Ribosomal_uS11"/>
</dbReference>
<dbReference type="InterPro" id="IPR019981">
    <property type="entry name" value="Ribosomal_uS11_bac-type"/>
</dbReference>
<dbReference type="InterPro" id="IPR018102">
    <property type="entry name" value="Ribosomal_uS11_CS"/>
</dbReference>
<dbReference type="InterPro" id="IPR036967">
    <property type="entry name" value="Ribosomal_uS11_sf"/>
</dbReference>
<dbReference type="NCBIfam" id="NF003698">
    <property type="entry name" value="PRK05309.1"/>
    <property type="match status" value="1"/>
</dbReference>
<dbReference type="NCBIfam" id="TIGR03632">
    <property type="entry name" value="uS11_bact"/>
    <property type="match status" value="1"/>
</dbReference>
<dbReference type="PANTHER" id="PTHR11759">
    <property type="entry name" value="40S RIBOSOMAL PROTEIN S14/30S RIBOSOMAL PROTEIN S11"/>
    <property type="match status" value="1"/>
</dbReference>
<dbReference type="Pfam" id="PF00411">
    <property type="entry name" value="Ribosomal_S11"/>
    <property type="match status" value="1"/>
</dbReference>
<dbReference type="PIRSF" id="PIRSF002131">
    <property type="entry name" value="Ribosomal_S11"/>
    <property type="match status" value="1"/>
</dbReference>
<dbReference type="SUPFAM" id="SSF53137">
    <property type="entry name" value="Translational machinery components"/>
    <property type="match status" value="1"/>
</dbReference>
<dbReference type="PROSITE" id="PS00054">
    <property type="entry name" value="RIBOSOMAL_S11"/>
    <property type="match status" value="1"/>
</dbReference>
<gene>
    <name evidence="1" type="primary">rpsK</name>
    <name type="ordered locus">Franean1_6024</name>
</gene>
<sequence>MPPKTRAAGVKKVRRKEKKNVAHGHAHIKSTFNNTIVSITDPSGNVISWASAGHVGFKGSRKSTPFAAQMAAENAARKAQEHGMRKVDVFVKGPGSGRETAIRSLQAAGLEVGAIQDVTPTPHNGCRPPKRRRV</sequence>
<organism>
    <name type="scientific">Parafrankia sp. (strain EAN1pec)</name>
    <dbReference type="NCBI Taxonomy" id="298653"/>
    <lineage>
        <taxon>Bacteria</taxon>
        <taxon>Bacillati</taxon>
        <taxon>Actinomycetota</taxon>
        <taxon>Actinomycetes</taxon>
        <taxon>Frankiales</taxon>
        <taxon>Frankiaceae</taxon>
        <taxon>Parafrankia</taxon>
    </lineage>
</organism>
<protein>
    <recommendedName>
        <fullName evidence="1">Small ribosomal subunit protein uS11</fullName>
    </recommendedName>
    <alternativeName>
        <fullName evidence="2">30S ribosomal protein S11</fullName>
    </alternativeName>
</protein>
<reference key="1">
    <citation type="journal article" date="2007" name="Genome Res.">
        <title>Genome characteristics of facultatively symbiotic Frankia sp. strains reflect host range and host plant biogeography.</title>
        <authorList>
            <person name="Normand P."/>
            <person name="Lapierre P."/>
            <person name="Tisa L.S."/>
            <person name="Gogarten J.P."/>
            <person name="Alloisio N."/>
            <person name="Bagnarol E."/>
            <person name="Bassi C.A."/>
            <person name="Berry A.M."/>
            <person name="Bickhart D.M."/>
            <person name="Choisne N."/>
            <person name="Couloux A."/>
            <person name="Cournoyer B."/>
            <person name="Cruveiller S."/>
            <person name="Daubin V."/>
            <person name="Demange N."/>
            <person name="Francino M.P."/>
            <person name="Goltsman E."/>
            <person name="Huang Y."/>
            <person name="Kopp O.R."/>
            <person name="Labarre L."/>
            <person name="Lapidus A."/>
            <person name="Lavire C."/>
            <person name="Marechal J."/>
            <person name="Martinez M."/>
            <person name="Mastronunzio J.E."/>
            <person name="Mullin B.C."/>
            <person name="Niemann J."/>
            <person name="Pujic P."/>
            <person name="Rawnsley T."/>
            <person name="Rouy Z."/>
            <person name="Schenowitz C."/>
            <person name="Sellstedt A."/>
            <person name="Tavares F."/>
            <person name="Tomkins J.P."/>
            <person name="Vallenet D."/>
            <person name="Valverde C."/>
            <person name="Wall L.G."/>
            <person name="Wang Y."/>
            <person name="Medigue C."/>
            <person name="Benson D.R."/>
        </authorList>
    </citation>
    <scope>NUCLEOTIDE SEQUENCE [LARGE SCALE GENOMIC DNA]</scope>
    <source>
        <strain>EAN1pec</strain>
    </source>
</reference>
<comment type="function">
    <text evidence="1">Located on the platform of the 30S subunit, it bridges several disparate RNA helices of the 16S rRNA. Forms part of the Shine-Dalgarno cleft in the 70S ribosome.</text>
</comment>
<comment type="subunit">
    <text evidence="1">Part of the 30S ribosomal subunit. Interacts with proteins S7 and S18. Binds to IF-3.</text>
</comment>
<comment type="similarity">
    <text evidence="1">Belongs to the universal ribosomal protein uS11 family.</text>
</comment>
<accession>A8LB07</accession>
<evidence type="ECO:0000255" key="1">
    <source>
        <dbReference type="HAMAP-Rule" id="MF_01310"/>
    </source>
</evidence>
<evidence type="ECO:0000305" key="2"/>
<name>RS11_PARS2</name>